<proteinExistence type="inferred from homology"/>
<reference key="1">
    <citation type="journal article" date="2011" name="J. Biol. Chem.">
        <title>Sandalwood fragrance biosynthesis involves sesquiterpene synthases of both the terpene synthase (TPS)-a and TPS-b Subfamilies, including santalene synthases.</title>
        <authorList>
            <person name="Jones C.G."/>
            <person name="Moniodis J."/>
            <person name="Zulak K.G."/>
            <person name="Scaffidi A."/>
            <person name="Plummer J.A."/>
            <person name="Ghisalberti E.L."/>
            <person name="Barbour E.L."/>
            <person name="Bohlmann J."/>
        </authorList>
    </citation>
    <scope>NUCLEOTIDE SEQUENCE [GENOMIC DNA]</scope>
</reference>
<evidence type="ECO:0000250" key="1"/>
<evidence type="ECO:0000305" key="2"/>
<organism>
    <name type="scientific">Santalum austrocaledonicum</name>
    <name type="common">Sandalwood</name>
    <dbReference type="NCBI Taxonomy" id="293154"/>
    <lineage>
        <taxon>Eukaryota</taxon>
        <taxon>Viridiplantae</taxon>
        <taxon>Streptophyta</taxon>
        <taxon>Embryophyta</taxon>
        <taxon>Tracheophyta</taxon>
        <taxon>Spermatophyta</taxon>
        <taxon>Magnoliopsida</taxon>
        <taxon>eudicotyledons</taxon>
        <taxon>Gunneridae</taxon>
        <taxon>Pentapetalae</taxon>
        <taxon>Santalales</taxon>
        <taxon>Santalaceae</taxon>
        <taxon>Santalum</taxon>
    </lineage>
</organism>
<gene>
    <name type="primary">SesquiTPS</name>
</gene>
<feature type="chain" id="PRO_0000419326" description="Probable sesquiterpene synthase">
    <location>
        <begin position="1"/>
        <end position="562"/>
    </location>
</feature>
<feature type="short sequence motif" description="DDXXD motif">
    <location>
        <begin position="315"/>
        <end position="319"/>
    </location>
</feature>
<feature type="binding site" evidence="1">
    <location>
        <position position="315"/>
    </location>
    <ligand>
        <name>Mg(2+)</name>
        <dbReference type="ChEBI" id="CHEBI:18420"/>
        <label>1</label>
    </ligand>
</feature>
<feature type="binding site" evidence="1">
    <location>
        <position position="315"/>
    </location>
    <ligand>
        <name>Mg(2+)</name>
        <dbReference type="ChEBI" id="CHEBI:18420"/>
        <label>2</label>
    </ligand>
</feature>
<feature type="binding site" evidence="1">
    <location>
        <position position="319"/>
    </location>
    <ligand>
        <name>Mg(2+)</name>
        <dbReference type="ChEBI" id="CHEBI:18420"/>
        <label>1</label>
    </ligand>
</feature>
<feature type="binding site" evidence="1">
    <location>
        <position position="319"/>
    </location>
    <ligand>
        <name>Mg(2+)</name>
        <dbReference type="ChEBI" id="CHEBI:18420"/>
        <label>2</label>
    </ligand>
</feature>
<feature type="binding site" evidence="1">
    <location>
        <position position="467"/>
    </location>
    <ligand>
        <name>Mg(2+)</name>
        <dbReference type="ChEBI" id="CHEBI:18420"/>
        <label>3</label>
    </ligand>
</feature>
<accession>F6M8H5</accession>
<sequence length="562" mass="65922">MENQKMPISSVSNLKDLNMISRPVANFPPSIWGDRFINYACEDENDQAQKEKQVEELKELVRRELAITVDKPLQQLNIIDATQRLGIAYLFENEIEESLEHIYLHTYVENTCFEGSDDLYSVALWFRLLRQNDYRVSCDVFNKFRDNEGNFKNNLMEDTKGLLELYEATHLSVHGEEMLDDALEFTKTRLESVVSHLNYPLAEQVRHALYQPLHKGLPRLEAVYFFRIYEAHASHNKALLKLAKLDFNLLQSFHKKELSDIARWWKSLDFAAKFPFARDRLVEGYFWVLGVYFEPQYSLARKIIIKVFTMISTIDDIYDAYGTLDELELFTKAMQRWDVGSLDQLPEYMKPCYKSILDVYNEIEVEMDNQGSLFRMHYAKEVMKKLVEGYMDEAKWCHEKYVPTFQEYMSVALVTSGYTFLTTISYLGMGEIASKEAFDWLFSHPPVIEASESVGRLMDDTRSHKFEQERGHVASGIECYMKQYGVTEEEARDEFRKRLVKAWKDINEECLRPYRVPKPLLMRILNLTRVIDVIYKNEDGYTHVKKAMKDNIASLLIDPMIV</sequence>
<keyword id="KW-0456">Lyase</keyword>
<keyword id="KW-0460">Magnesium</keyword>
<keyword id="KW-0464">Manganese</keyword>
<keyword id="KW-0479">Metal-binding</keyword>
<dbReference type="EC" id="4.2.3.-"/>
<dbReference type="EMBL" id="JF746808">
    <property type="protein sequence ID" value="AEF32535.1"/>
    <property type="molecule type" value="Genomic_DNA"/>
</dbReference>
<dbReference type="SMR" id="F6M8H5"/>
<dbReference type="GO" id="GO:0000287">
    <property type="term" value="F:magnesium ion binding"/>
    <property type="evidence" value="ECO:0007669"/>
    <property type="project" value="InterPro"/>
</dbReference>
<dbReference type="GO" id="GO:0010333">
    <property type="term" value="F:terpene synthase activity"/>
    <property type="evidence" value="ECO:0007669"/>
    <property type="project" value="InterPro"/>
</dbReference>
<dbReference type="GO" id="GO:0016102">
    <property type="term" value="P:diterpenoid biosynthetic process"/>
    <property type="evidence" value="ECO:0007669"/>
    <property type="project" value="InterPro"/>
</dbReference>
<dbReference type="CDD" id="cd00684">
    <property type="entry name" value="Terpene_cyclase_plant_C1"/>
    <property type="match status" value="1"/>
</dbReference>
<dbReference type="FunFam" id="1.10.600.10:FF:000007">
    <property type="entry name" value="Isoprene synthase, chloroplastic"/>
    <property type="match status" value="1"/>
</dbReference>
<dbReference type="FunFam" id="1.50.10.130:FF:000001">
    <property type="entry name" value="Isoprene synthase, chloroplastic"/>
    <property type="match status" value="1"/>
</dbReference>
<dbReference type="Gene3D" id="1.10.600.10">
    <property type="entry name" value="Farnesyl Diphosphate Synthase"/>
    <property type="match status" value="1"/>
</dbReference>
<dbReference type="Gene3D" id="1.50.10.130">
    <property type="entry name" value="Terpene synthase, N-terminal domain"/>
    <property type="match status" value="1"/>
</dbReference>
<dbReference type="InterPro" id="IPR008949">
    <property type="entry name" value="Isoprenoid_synthase_dom_sf"/>
</dbReference>
<dbReference type="InterPro" id="IPR034741">
    <property type="entry name" value="Terpene_cyclase-like_1_C"/>
</dbReference>
<dbReference type="InterPro" id="IPR044814">
    <property type="entry name" value="Terpene_cyclase_plant_C1"/>
</dbReference>
<dbReference type="InterPro" id="IPR001906">
    <property type="entry name" value="Terpene_synth_N"/>
</dbReference>
<dbReference type="InterPro" id="IPR036965">
    <property type="entry name" value="Terpene_synth_N_sf"/>
</dbReference>
<dbReference type="InterPro" id="IPR050148">
    <property type="entry name" value="Terpene_synthase-like"/>
</dbReference>
<dbReference type="InterPro" id="IPR005630">
    <property type="entry name" value="Terpene_synthase_metal-bd"/>
</dbReference>
<dbReference type="InterPro" id="IPR008930">
    <property type="entry name" value="Terpenoid_cyclase/PrenylTrfase"/>
</dbReference>
<dbReference type="PANTHER" id="PTHR31225:SF251">
    <property type="entry name" value="(-)-GERMACRENE D SYNTHASE-LIKE ISOFORM X2"/>
    <property type="match status" value="1"/>
</dbReference>
<dbReference type="PANTHER" id="PTHR31225">
    <property type="entry name" value="OS04G0344100 PROTEIN-RELATED"/>
    <property type="match status" value="1"/>
</dbReference>
<dbReference type="Pfam" id="PF01397">
    <property type="entry name" value="Terpene_synth"/>
    <property type="match status" value="1"/>
</dbReference>
<dbReference type="Pfam" id="PF03936">
    <property type="entry name" value="Terpene_synth_C"/>
    <property type="match status" value="1"/>
</dbReference>
<dbReference type="SFLD" id="SFLDG01019">
    <property type="entry name" value="Terpene_Cyclase_Like_1_C_Termi"/>
    <property type="match status" value="1"/>
</dbReference>
<dbReference type="SFLD" id="SFLDG01604">
    <property type="entry name" value="Terpene_Cyclase_Like_1_C_Termi"/>
    <property type="match status" value="1"/>
</dbReference>
<dbReference type="SUPFAM" id="SSF48239">
    <property type="entry name" value="Terpenoid cyclases/Protein prenyltransferases"/>
    <property type="match status" value="1"/>
</dbReference>
<dbReference type="SUPFAM" id="SSF48576">
    <property type="entry name" value="Terpenoid synthases"/>
    <property type="match status" value="1"/>
</dbReference>
<comment type="function">
    <text evidence="1">Sesquiterpene synthase.</text>
</comment>
<comment type="cofactor">
    <cofactor evidence="1">
        <name>Mg(2+)</name>
        <dbReference type="ChEBI" id="CHEBI:18420"/>
    </cofactor>
    <cofactor evidence="1">
        <name>Mn(2+)</name>
        <dbReference type="ChEBI" id="CHEBI:29035"/>
    </cofactor>
    <text evidence="1">Binds 3 Mg(2+) or Mn(2+) ions per subunit.</text>
</comment>
<comment type="similarity">
    <text evidence="2">Belongs to the terpene synthase family. Tpsa subfamily.</text>
</comment>
<protein>
    <recommendedName>
        <fullName>Probable sesquiterpene synthase</fullName>
        <shortName>SauSTPS</shortName>
        <ecNumber>4.2.3.-</ecNumber>
    </recommendedName>
</protein>
<name>SAUST_SANAS</name>